<name>MSRP_HISS2</name>
<gene>
    <name evidence="1" type="primary">msrP</name>
    <name type="ordered locus">HSM_1495</name>
</gene>
<comment type="function">
    <text evidence="1">Part of the MsrPQ system that repairs oxidized periplasmic proteins containing methionine sulfoxide residues (Met-O), using respiratory chain electrons. Thus protects these proteins from oxidative-stress damage caused by reactive species of oxygen and chlorine generated by the host defense mechanisms. MsrPQ is essential for the maintenance of envelope integrity under bleach stress, rescuing a wide series of structurally unrelated periplasmic proteins from methionine oxidation. The catalytic subunit MsrP is non-stereospecific, being able to reduce both (R-) and (S-) diastereoisomers of methionine sulfoxide.</text>
</comment>
<comment type="catalytic activity">
    <reaction evidence="1">
        <text>L-methionyl-[protein] + a quinone + H2O = L-methionyl-(S)-S-oxide-[protein] + a quinol</text>
        <dbReference type="Rhea" id="RHEA:51292"/>
        <dbReference type="Rhea" id="RHEA-COMP:12313"/>
        <dbReference type="Rhea" id="RHEA-COMP:12315"/>
        <dbReference type="ChEBI" id="CHEBI:15377"/>
        <dbReference type="ChEBI" id="CHEBI:16044"/>
        <dbReference type="ChEBI" id="CHEBI:24646"/>
        <dbReference type="ChEBI" id="CHEBI:44120"/>
        <dbReference type="ChEBI" id="CHEBI:132124"/>
    </reaction>
</comment>
<comment type="catalytic activity">
    <reaction evidence="1">
        <text>L-methionyl-[protein] + a quinone + H2O = L-methionyl-(R)-S-oxide-[protein] + a quinol</text>
        <dbReference type="Rhea" id="RHEA:51296"/>
        <dbReference type="Rhea" id="RHEA-COMP:12313"/>
        <dbReference type="Rhea" id="RHEA-COMP:12314"/>
        <dbReference type="ChEBI" id="CHEBI:15377"/>
        <dbReference type="ChEBI" id="CHEBI:16044"/>
        <dbReference type="ChEBI" id="CHEBI:24646"/>
        <dbReference type="ChEBI" id="CHEBI:45764"/>
        <dbReference type="ChEBI" id="CHEBI:132124"/>
    </reaction>
</comment>
<comment type="cofactor">
    <cofactor evidence="1">
        <name>Mo-molybdopterin</name>
        <dbReference type="ChEBI" id="CHEBI:71302"/>
    </cofactor>
    <text evidence="1">Binds 1 Mo-molybdopterin (Mo-MPT) cofactor per subunit.</text>
</comment>
<comment type="subunit">
    <text evidence="1">Heterodimer of a catalytic subunit (MsrP) and a heme-binding subunit (MsrQ).</text>
</comment>
<comment type="subcellular location">
    <subcellularLocation>
        <location evidence="1">Periplasm</location>
    </subcellularLocation>
    <text evidence="1">Is attached to the inner membrane when interacting with the MsrQ subunit.</text>
</comment>
<comment type="PTM">
    <text evidence="1">Predicted to be exported by the Tat system. The position of the signal peptide cleavage has not been experimentally proven.</text>
</comment>
<comment type="similarity">
    <text evidence="1">Belongs to the MsrP family.</text>
</comment>
<protein>
    <recommendedName>
        <fullName evidence="1">Protein-methionine-sulfoxide reductase catalytic subunit MsrP</fullName>
        <ecNumber evidence="1">1.8.5.-</ecNumber>
    </recommendedName>
</protein>
<sequence length="317" mass="36226">MKKLTSNDVTPEEIFYQRRKIIKAFGLSAVATALPTFSFAQESSDLKALEYKKSTESTLILTPENKVTGYNNFYEFGVDKGSPAHYAKKFQVNPWKLEIGGEVENPFTLNYDQLFTQFPLEERIYRFRCVEAWAMVVPWIGFELNKLLEKAKPTSKAKYVVFHTLYDPEQMPGQKNHFFGGGIHYPYVEALTLAEAMHSLTLMSVGLYGKALAPQNGAPIRLVVPWKYGFKSIKSIVKITLSETRPRTTWESLAPNEYGFYANVNPKVDHPRWSQASERVIGAGGLLRVKRQPTLMFNGYEREVAHLYKGLDLRINY</sequence>
<dbReference type="EC" id="1.8.5.-" evidence="1"/>
<dbReference type="EMBL" id="CP000947">
    <property type="protein sequence ID" value="ACA31246.1"/>
    <property type="molecule type" value="Genomic_DNA"/>
</dbReference>
<dbReference type="RefSeq" id="WP_012340633.1">
    <property type="nucleotide sequence ID" value="NC_010519.1"/>
</dbReference>
<dbReference type="SMR" id="B0UUL6"/>
<dbReference type="STRING" id="228400.HSM_1495"/>
<dbReference type="GeneID" id="31487793"/>
<dbReference type="KEGG" id="hsm:HSM_1495"/>
<dbReference type="HOGENOM" id="CLU_045520_0_0_6"/>
<dbReference type="GO" id="GO:0042597">
    <property type="term" value="C:periplasmic space"/>
    <property type="evidence" value="ECO:0007669"/>
    <property type="project" value="UniProtKB-SubCell"/>
</dbReference>
<dbReference type="GO" id="GO:0046872">
    <property type="term" value="F:metal ion binding"/>
    <property type="evidence" value="ECO:0007669"/>
    <property type="project" value="UniProtKB-KW"/>
</dbReference>
<dbReference type="GO" id="GO:0043546">
    <property type="term" value="F:molybdopterin cofactor binding"/>
    <property type="evidence" value="ECO:0007669"/>
    <property type="project" value="UniProtKB-UniRule"/>
</dbReference>
<dbReference type="GO" id="GO:0016672">
    <property type="term" value="F:oxidoreductase activity, acting on a sulfur group of donors, quinone or similar compound as acceptor"/>
    <property type="evidence" value="ECO:0007669"/>
    <property type="project" value="UniProtKB-UniRule"/>
</dbReference>
<dbReference type="GO" id="GO:0030091">
    <property type="term" value="P:protein repair"/>
    <property type="evidence" value="ECO:0007669"/>
    <property type="project" value="UniProtKB-UniRule"/>
</dbReference>
<dbReference type="Gene3D" id="3.90.420.10">
    <property type="entry name" value="Oxidoreductase, molybdopterin-binding domain"/>
    <property type="match status" value="1"/>
</dbReference>
<dbReference type="HAMAP" id="MF_01206">
    <property type="entry name" value="MsrP"/>
    <property type="match status" value="1"/>
</dbReference>
<dbReference type="InterPro" id="IPR022867">
    <property type="entry name" value="MsrP"/>
</dbReference>
<dbReference type="InterPro" id="IPR000572">
    <property type="entry name" value="OxRdtase_Mopterin-bd_dom"/>
</dbReference>
<dbReference type="InterPro" id="IPR036374">
    <property type="entry name" value="OxRdtase_Mopterin-bd_sf"/>
</dbReference>
<dbReference type="NCBIfam" id="NF003767">
    <property type="entry name" value="PRK05363.1"/>
    <property type="match status" value="1"/>
</dbReference>
<dbReference type="PANTHER" id="PTHR43032">
    <property type="entry name" value="PROTEIN-METHIONINE-SULFOXIDE REDUCTASE"/>
    <property type="match status" value="1"/>
</dbReference>
<dbReference type="PANTHER" id="PTHR43032:SF3">
    <property type="entry name" value="PROTEIN-METHIONINE-SULFOXIDE REDUCTASE CATALYTIC SUBUNIT MSRP"/>
    <property type="match status" value="1"/>
</dbReference>
<dbReference type="Pfam" id="PF00174">
    <property type="entry name" value="Oxidored_molyb"/>
    <property type="match status" value="1"/>
</dbReference>
<dbReference type="SUPFAM" id="SSF56524">
    <property type="entry name" value="Oxidoreductase molybdopterin-binding domain"/>
    <property type="match status" value="1"/>
</dbReference>
<accession>B0UUL6</accession>
<proteinExistence type="inferred from homology"/>
<feature type="signal peptide" description="Tat-type signal" evidence="1">
    <location>
        <begin position="1"/>
        <end position="40"/>
    </location>
</feature>
<feature type="chain" id="PRO_5000311093" description="Protein-methionine-sulfoxide reductase catalytic subunit MsrP" evidence="1">
    <location>
        <begin position="41"/>
        <end position="317"/>
    </location>
</feature>
<feature type="binding site" evidence="1">
    <location>
        <position position="71"/>
    </location>
    <ligand>
        <name>Mo-molybdopterin</name>
        <dbReference type="ChEBI" id="CHEBI:71302"/>
    </ligand>
</feature>
<feature type="binding site" evidence="1">
    <location>
        <begin position="74"/>
        <end position="75"/>
    </location>
    <ligand>
        <name>Mo-molybdopterin</name>
        <dbReference type="ChEBI" id="CHEBI:71302"/>
    </ligand>
</feature>
<feature type="binding site" evidence="1">
    <location>
        <position position="129"/>
    </location>
    <ligand>
        <name>Mo-molybdopterin</name>
        <dbReference type="ChEBI" id="CHEBI:71302"/>
    </ligand>
    <ligandPart>
        <name>Mo</name>
        <dbReference type="ChEBI" id="CHEBI:28685"/>
    </ligandPart>
</feature>
<feature type="binding site" evidence="1">
    <location>
        <position position="164"/>
    </location>
    <ligand>
        <name>Mo-molybdopterin</name>
        <dbReference type="ChEBI" id="CHEBI:71302"/>
    </ligand>
</feature>
<feature type="binding site" evidence="1">
    <location>
        <position position="216"/>
    </location>
    <ligand>
        <name>Mo-molybdopterin</name>
        <dbReference type="ChEBI" id="CHEBI:71302"/>
    </ligand>
</feature>
<feature type="binding site" evidence="1">
    <location>
        <position position="221"/>
    </location>
    <ligand>
        <name>Mo-molybdopterin</name>
        <dbReference type="ChEBI" id="CHEBI:71302"/>
    </ligand>
</feature>
<feature type="binding site" evidence="1">
    <location>
        <begin position="232"/>
        <end position="234"/>
    </location>
    <ligand>
        <name>Mo-molybdopterin</name>
        <dbReference type="ChEBI" id="CHEBI:71302"/>
    </ligand>
</feature>
<organism>
    <name type="scientific">Histophilus somni (strain 2336)</name>
    <name type="common">Haemophilus somnus</name>
    <dbReference type="NCBI Taxonomy" id="228400"/>
    <lineage>
        <taxon>Bacteria</taxon>
        <taxon>Pseudomonadati</taxon>
        <taxon>Pseudomonadota</taxon>
        <taxon>Gammaproteobacteria</taxon>
        <taxon>Pasteurellales</taxon>
        <taxon>Pasteurellaceae</taxon>
        <taxon>Histophilus</taxon>
    </lineage>
</organism>
<keyword id="KW-0479">Metal-binding</keyword>
<keyword id="KW-0500">Molybdenum</keyword>
<keyword id="KW-0560">Oxidoreductase</keyword>
<keyword id="KW-0574">Periplasm</keyword>
<keyword id="KW-0732">Signal</keyword>
<reference key="1">
    <citation type="submission" date="2008-02" db="EMBL/GenBank/DDBJ databases">
        <title>Complete sequence of Haemophilus somnus 2336.</title>
        <authorList>
            <consortium name="US DOE Joint Genome Institute"/>
            <person name="Siddaramappa S."/>
            <person name="Duncan A.J."/>
            <person name="Challacombe J.F."/>
            <person name="Rainey D."/>
            <person name="Gillaspy A.F."/>
            <person name="Carson M."/>
            <person name="Gipson J."/>
            <person name="Gipson M."/>
            <person name="Bruce D."/>
            <person name="Detter J.C."/>
            <person name="Han C.S."/>
            <person name="Land M."/>
            <person name="Tapia R."/>
            <person name="Thompson L.S."/>
            <person name="Orvis J."/>
            <person name="Zaitshik J."/>
            <person name="Barnes G."/>
            <person name="Brettin T.S."/>
            <person name="Dyer D.W."/>
            <person name="Inzana T.J."/>
        </authorList>
    </citation>
    <scope>NUCLEOTIDE SEQUENCE [LARGE SCALE GENOMIC DNA]</scope>
    <source>
        <strain>2336</strain>
    </source>
</reference>
<evidence type="ECO:0000255" key="1">
    <source>
        <dbReference type="HAMAP-Rule" id="MF_01206"/>
    </source>
</evidence>